<evidence type="ECO:0000250" key="1"/>
<evidence type="ECO:0000255" key="2"/>
<evidence type="ECO:0000305" key="3"/>
<keyword id="KW-1015">Disulfide bond</keyword>
<keyword id="KW-0960">Knottin</keyword>
<keyword id="KW-0964">Secreted</keyword>
<keyword id="KW-0732">Signal</keyword>
<keyword id="KW-0800">Toxin</keyword>
<protein>
    <recommendedName>
        <fullName>Toxin-like structure LSTX-D2</fullName>
    </recommendedName>
</protein>
<proteinExistence type="evidence at transcript level"/>
<feature type="signal peptide" evidence="2">
    <location>
        <begin position="1"/>
        <end position="22"/>
    </location>
</feature>
<feature type="propeptide" id="PRO_0000401695" evidence="1">
    <location>
        <begin position="23"/>
        <end position="44"/>
    </location>
</feature>
<feature type="chain" id="PRO_0000401696" description="Toxin-like structure LSTX-D2">
    <location>
        <begin position="45"/>
        <end position="115"/>
    </location>
</feature>
<feature type="disulfide bond" evidence="1">
    <location>
        <begin position="48"/>
        <end position="63"/>
    </location>
</feature>
<feature type="disulfide bond" evidence="1">
    <location>
        <begin position="55"/>
        <end position="72"/>
    </location>
</feature>
<feature type="disulfide bond" evidence="1">
    <location>
        <begin position="62"/>
        <end position="87"/>
    </location>
</feature>
<feature type="disulfide bond" evidence="1">
    <location>
        <begin position="74"/>
        <end position="85"/>
    </location>
</feature>
<organism>
    <name type="scientific">Lycosa singoriensis</name>
    <name type="common">Wolf spider</name>
    <name type="synonym">Aranea singoriensis</name>
    <dbReference type="NCBI Taxonomy" id="434756"/>
    <lineage>
        <taxon>Eukaryota</taxon>
        <taxon>Metazoa</taxon>
        <taxon>Ecdysozoa</taxon>
        <taxon>Arthropoda</taxon>
        <taxon>Chelicerata</taxon>
        <taxon>Arachnida</taxon>
        <taxon>Araneae</taxon>
        <taxon>Araneomorphae</taxon>
        <taxon>Entelegynae</taxon>
        <taxon>Lycosoidea</taxon>
        <taxon>Lycosidae</taxon>
        <taxon>Lycosa</taxon>
    </lineage>
</organism>
<name>TXZ02_LYCSI</name>
<accession>B6DCU1</accession>
<reference key="1">
    <citation type="journal article" date="2010" name="Zoology">
        <title>Transcriptome analysis of the venom glands of the Chinese wolf spider Lycosa singoriensis.</title>
        <authorList>
            <person name="Zhang Y."/>
            <person name="Chen J."/>
            <person name="Tang X."/>
            <person name="Wang F."/>
            <person name="Jiang L."/>
            <person name="Xiong X."/>
            <person name="Wang M."/>
            <person name="Rong M."/>
            <person name="Liu Z."/>
            <person name="Liang S."/>
        </authorList>
    </citation>
    <scope>NUCLEOTIDE SEQUENCE [LARGE SCALE MRNA]</scope>
    <source>
        <tissue>Venom gland</tissue>
    </source>
</reference>
<dbReference type="EMBL" id="EU926025">
    <property type="protein sequence ID" value="ACI41357.1"/>
    <property type="molecule type" value="mRNA"/>
</dbReference>
<dbReference type="EMBL" id="FM864029">
    <property type="protein sequence ID" value="CAS03626.1"/>
    <property type="molecule type" value="mRNA"/>
</dbReference>
<dbReference type="SMR" id="B6DCU1"/>
<dbReference type="ArachnoServer" id="AS001786">
    <property type="toxin name" value="U3-lycotoxin-Ls1y"/>
</dbReference>
<dbReference type="GO" id="GO:0005576">
    <property type="term" value="C:extracellular region"/>
    <property type="evidence" value="ECO:0007669"/>
    <property type="project" value="UniProtKB-SubCell"/>
</dbReference>
<dbReference type="GO" id="GO:0090729">
    <property type="term" value="F:toxin activity"/>
    <property type="evidence" value="ECO:0007669"/>
    <property type="project" value="UniProtKB-KW"/>
</dbReference>
<dbReference type="InterPro" id="IPR019553">
    <property type="entry name" value="Spider_toxin_CSTX_knottin"/>
</dbReference>
<dbReference type="InterPro" id="IPR011142">
    <property type="entry name" value="Spider_toxin_CSTX_Knottin_CS"/>
</dbReference>
<dbReference type="Pfam" id="PF10530">
    <property type="entry name" value="Toxin_35"/>
    <property type="match status" value="1"/>
</dbReference>
<dbReference type="PROSITE" id="PS60029">
    <property type="entry name" value="SPIDER_CSTX"/>
    <property type="match status" value="1"/>
</dbReference>
<sequence length="115" mass="13116">MKVLVLFSVLFLTLFSYSSTEAIDEFDSDAEDDMLSLMANEQVRAKACTPRLHDCSHDRHSCCRSELFKDVCTCFYPEGGDNEVCTCQQPKHLKYMEKAADKAKKFGGKIKKWFG</sequence>
<comment type="subcellular location">
    <subcellularLocation>
        <location evidence="1">Secreted</location>
    </subcellularLocation>
</comment>
<comment type="tissue specificity">
    <text>Expressed by the venom gland.</text>
</comment>
<comment type="domain">
    <text evidence="1">The presence of a 'disulfide through disulfide knot' structurally defines this protein as a knottin.</text>
</comment>
<comment type="similarity">
    <text evidence="3">Belongs to the neurotoxin 19 (CSTX) family. 01 subfamily.</text>
</comment>